<organism>
    <name type="scientific">Drosophila melanogaster</name>
    <name type="common">Fruit fly</name>
    <dbReference type="NCBI Taxonomy" id="7227"/>
    <lineage>
        <taxon>Eukaryota</taxon>
        <taxon>Metazoa</taxon>
        <taxon>Ecdysozoa</taxon>
        <taxon>Arthropoda</taxon>
        <taxon>Hexapoda</taxon>
        <taxon>Insecta</taxon>
        <taxon>Pterygota</taxon>
        <taxon>Neoptera</taxon>
        <taxon>Endopterygota</taxon>
        <taxon>Diptera</taxon>
        <taxon>Brachycera</taxon>
        <taxon>Muscomorpha</taxon>
        <taxon>Ephydroidea</taxon>
        <taxon>Drosophilidae</taxon>
        <taxon>Drosophila</taxon>
        <taxon>Sophophora</taxon>
    </lineage>
</organism>
<proteinExistence type="evidence at protein level"/>
<sequence length="344" mass="36336">MGNVLAASSGAPGSGASNLGLGLQEPAPLPSNSGSLTESSSSAEGLDSLAAAKDAALENPGTVEELHKKCKDIQAITFEGAKIMLNKGLSNHFQVSHTINMSNVVPSGYRFGATYVGTKEFSPTEAFPVLLGDIDPAGNLNANVIHQFSARLRCKFASQIQESKVVASQLTTDYRGSDYTLSLTVANPSIFTNSGVVVGQYLQSVTPALALGSELAYQFGPNVPGRQIAIMSVVGRYTAGSSVWSGTLGQSGLHVCYYQKASDQLQIGAEVETSLRMQESVATLAYQIDLPKANLVFRGGIDSNWQIFGVLEKRLAPLPFTLALSGRMNHVKNNFRLGCGLMIG</sequence>
<feature type="chain" id="PRO_0000051530" description="Mitochondrial import receptor subunit TOM40 homolog 1">
    <location>
        <begin position="1"/>
        <end position="344"/>
    </location>
</feature>
<feature type="region of interest" description="Disordered" evidence="2">
    <location>
        <begin position="1"/>
        <end position="44"/>
    </location>
</feature>
<feature type="compositionally biased region" description="Low complexity" evidence="2">
    <location>
        <begin position="1"/>
        <end position="23"/>
    </location>
</feature>
<feature type="compositionally biased region" description="Low complexity" evidence="2">
    <location>
        <begin position="31"/>
        <end position="44"/>
    </location>
</feature>
<feature type="sequence conflict" description="In Ref. 1; AAF20172." evidence="4" ref="1">
    <original>G</original>
    <variation>A</variation>
    <location>
        <position position="2"/>
    </location>
</feature>
<feature type="sequence conflict" description="In Ref. 1; AAF20172." evidence="4" ref="1">
    <original>G</original>
    <variation>D</variation>
    <location>
        <position position="13"/>
    </location>
</feature>
<feature type="helix" evidence="5">
    <location>
        <begin position="63"/>
        <end position="67"/>
    </location>
</feature>
<feature type="turn" evidence="5">
    <location>
        <begin position="68"/>
        <end position="73"/>
    </location>
</feature>
<feature type="strand" evidence="5">
    <location>
        <begin position="80"/>
        <end position="90"/>
    </location>
</feature>
<feature type="strand" evidence="5">
    <location>
        <begin position="93"/>
        <end position="101"/>
    </location>
</feature>
<feature type="strand" evidence="5">
    <location>
        <begin position="103"/>
        <end position="105"/>
    </location>
</feature>
<feature type="strand" evidence="5">
    <location>
        <begin position="108"/>
        <end position="116"/>
    </location>
</feature>
<feature type="strand" evidence="5">
    <location>
        <begin position="129"/>
        <end position="134"/>
    </location>
</feature>
<feature type="strand" evidence="5">
    <location>
        <begin position="140"/>
        <end position="146"/>
    </location>
</feature>
<feature type="strand" evidence="5">
    <location>
        <begin position="148"/>
        <end position="151"/>
    </location>
</feature>
<feature type="strand" evidence="5">
    <location>
        <begin position="153"/>
        <end position="161"/>
    </location>
</feature>
<feature type="strand" evidence="5">
    <location>
        <begin position="164"/>
        <end position="175"/>
    </location>
</feature>
<feature type="strand" evidence="5">
    <location>
        <begin position="177"/>
        <end position="187"/>
    </location>
</feature>
<feature type="strand" evidence="5">
    <location>
        <begin position="190"/>
        <end position="193"/>
    </location>
</feature>
<feature type="strand" evidence="5">
    <location>
        <begin position="195"/>
        <end position="206"/>
    </location>
</feature>
<feature type="strand" evidence="5">
    <location>
        <begin position="209"/>
        <end position="220"/>
    </location>
</feature>
<feature type="strand" evidence="5">
    <location>
        <begin position="223"/>
        <end position="237"/>
    </location>
</feature>
<feature type="strand" evidence="5">
    <location>
        <begin position="243"/>
        <end position="251"/>
    </location>
</feature>
<feature type="strand" evidence="5">
    <location>
        <begin position="253"/>
        <end position="262"/>
    </location>
</feature>
<feature type="strand" evidence="5">
    <location>
        <begin position="265"/>
        <end position="273"/>
    </location>
</feature>
<feature type="turn" evidence="5">
    <location>
        <begin position="275"/>
        <end position="277"/>
    </location>
</feature>
<feature type="strand" evidence="5">
    <location>
        <begin position="280"/>
        <end position="290"/>
    </location>
</feature>
<feature type="helix" evidence="5">
    <location>
        <begin position="291"/>
        <end position="293"/>
    </location>
</feature>
<feature type="strand" evidence="5">
    <location>
        <begin position="295"/>
        <end position="302"/>
    </location>
</feature>
<feature type="strand" evidence="5">
    <location>
        <begin position="305"/>
        <end position="314"/>
    </location>
</feature>
<feature type="strand" evidence="5">
    <location>
        <begin position="316"/>
        <end position="329"/>
    </location>
</feature>
<feature type="turn" evidence="5">
    <location>
        <begin position="330"/>
        <end position="333"/>
    </location>
</feature>
<feature type="strand" evidence="5">
    <location>
        <begin position="334"/>
        <end position="343"/>
    </location>
</feature>
<accession>Q9U4L6</accession>
<accession>A4V439</accession>
<accession>Q9W3P9</accession>
<name>TO401_DROME</name>
<keyword id="KW-0002">3D-structure</keyword>
<keyword id="KW-0406">Ion transport</keyword>
<keyword id="KW-0472">Membrane</keyword>
<keyword id="KW-0496">Mitochondrion</keyword>
<keyword id="KW-1000">Mitochondrion outer membrane</keyword>
<keyword id="KW-0626">Porin</keyword>
<keyword id="KW-0653">Protein transport</keyword>
<keyword id="KW-1185">Reference proteome</keyword>
<keyword id="KW-0812">Transmembrane</keyword>
<keyword id="KW-1134">Transmembrane beta strand</keyword>
<keyword id="KW-0813">Transport</keyword>
<gene>
    <name type="primary">Tom40</name>
    <name type="synonym">mit</name>
    <name type="synonym">ms(1)15</name>
    <name type="ORF">CG12157</name>
</gene>
<comment type="function">
    <text evidence="1">Channel-forming protein essential for import of protein precursors into mitochondria.</text>
</comment>
<comment type="subunit">
    <text evidence="1">Forms part of the preprotein translocase complex of the outer mitochondrial membrane (TOM complex). Interacts with mitochondrial targeting sequences (By similarity).</text>
</comment>
<comment type="subcellular location">
    <subcellularLocation>
        <location evidence="1">Mitochondrion outer membrane</location>
        <topology evidence="1">Multi-pass membrane protein</topology>
    </subcellularLocation>
</comment>
<comment type="tissue specificity">
    <text evidence="3">Ubiquitously expressed. In the male germ line expression is detected early in premeiotic spermatogonia and is persistent to the end of meiosis.</text>
</comment>
<comment type="developmental stage">
    <text evidence="3">Expressed both maternally and zygotically.</text>
</comment>
<comment type="similarity">
    <text evidence="4">Belongs to the Tom40 family.</text>
</comment>
<dbReference type="EMBL" id="AF165113">
    <property type="protein sequence ID" value="AAF20172.1"/>
    <property type="molecule type" value="mRNA"/>
</dbReference>
<dbReference type="EMBL" id="AE014298">
    <property type="protein sequence ID" value="AAF46272.1"/>
    <property type="molecule type" value="Genomic_DNA"/>
</dbReference>
<dbReference type="EMBL" id="AE014298">
    <property type="protein sequence ID" value="AAS65272.1"/>
    <property type="molecule type" value="Genomic_DNA"/>
</dbReference>
<dbReference type="EMBL" id="AY118926">
    <property type="protein sequence ID" value="AAM50786.1"/>
    <property type="molecule type" value="mRNA"/>
</dbReference>
<dbReference type="RefSeq" id="NP_001259313.1">
    <property type="nucleotide sequence ID" value="NM_001272384.1"/>
</dbReference>
<dbReference type="RefSeq" id="NP_652003.2">
    <property type="nucleotide sequence ID" value="NM_143746.5"/>
</dbReference>
<dbReference type="RefSeq" id="NP_996363.1">
    <property type="nucleotide sequence ID" value="NM_206640.2"/>
</dbReference>
<dbReference type="PDB" id="9ETM">
    <property type="method" value="EM"/>
    <property type="resolution" value="3.35 A"/>
    <property type="chains" value="A/B=55-344"/>
</dbReference>
<dbReference type="PDBsum" id="9ETM"/>
<dbReference type="EMDB" id="EMD-19944"/>
<dbReference type="SMR" id="Q9U4L6"/>
<dbReference type="BioGRID" id="69425">
    <property type="interactions" value="17"/>
</dbReference>
<dbReference type="ComplexPortal" id="CPX-8921">
    <property type="entry name" value="TOM40 mitochondrial outer membrane translocase complex"/>
</dbReference>
<dbReference type="DIP" id="DIP-18955N"/>
<dbReference type="FunCoup" id="Q9U4L6">
    <property type="interactions" value="2114"/>
</dbReference>
<dbReference type="IntAct" id="Q9U4L6">
    <property type="interactions" value="2"/>
</dbReference>
<dbReference type="STRING" id="7227.FBpp0305890"/>
<dbReference type="TCDB" id="1.B.8.2.2">
    <property type="family name" value="the mitochondrial and plastid porin (mpp) family"/>
</dbReference>
<dbReference type="PaxDb" id="7227-FBpp0305890"/>
<dbReference type="DNASU" id="44978"/>
<dbReference type="EnsemblMetazoa" id="FBtr0071073">
    <property type="protein sequence ID" value="FBpp0071031"/>
    <property type="gene ID" value="FBgn0016041"/>
</dbReference>
<dbReference type="EnsemblMetazoa" id="FBtr0071074">
    <property type="protein sequence ID" value="FBpp0089237"/>
    <property type="gene ID" value="FBgn0016041"/>
</dbReference>
<dbReference type="EnsemblMetazoa" id="FBtr0333748">
    <property type="protein sequence ID" value="FBpp0305890"/>
    <property type="gene ID" value="FBgn0016041"/>
</dbReference>
<dbReference type="GeneID" id="44978"/>
<dbReference type="KEGG" id="dme:Dmel_CG12157"/>
<dbReference type="UCSC" id="CG12157-RB">
    <property type="organism name" value="d. melanogaster"/>
</dbReference>
<dbReference type="AGR" id="FB:FBgn0016041"/>
<dbReference type="CTD" id="44978"/>
<dbReference type="FlyBase" id="FBgn0016041">
    <property type="gene designation" value="Tom40"/>
</dbReference>
<dbReference type="VEuPathDB" id="VectorBase:FBgn0016041"/>
<dbReference type="eggNOG" id="KOG3296">
    <property type="taxonomic scope" value="Eukaryota"/>
</dbReference>
<dbReference type="GeneTree" id="ENSGT00390000003308"/>
<dbReference type="HOGENOM" id="CLU_054399_0_0_1"/>
<dbReference type="InParanoid" id="Q9U4L6"/>
<dbReference type="OMA" id="TRFNYRW"/>
<dbReference type="OrthoDB" id="19656at2759"/>
<dbReference type="PhylomeDB" id="Q9U4L6"/>
<dbReference type="BioGRID-ORCS" id="44978">
    <property type="hits" value="1 hit in 3 CRISPR screens"/>
</dbReference>
<dbReference type="GenomeRNAi" id="44978"/>
<dbReference type="PRO" id="PR:Q9U4L6"/>
<dbReference type="Proteomes" id="UP000000803">
    <property type="component" value="Chromosome X"/>
</dbReference>
<dbReference type="Bgee" id="FBgn0016041">
    <property type="expression patterns" value="Expressed in cleaving embryo and 193 other cell types or tissues"/>
</dbReference>
<dbReference type="ExpressionAtlas" id="Q9U4L6">
    <property type="expression patterns" value="baseline and differential"/>
</dbReference>
<dbReference type="GO" id="GO:0005741">
    <property type="term" value="C:mitochondrial outer membrane"/>
    <property type="evidence" value="ECO:0000314"/>
    <property type="project" value="FlyBase"/>
</dbReference>
<dbReference type="GO" id="GO:0005742">
    <property type="term" value="C:mitochondrial outer membrane translocase complex"/>
    <property type="evidence" value="ECO:0000314"/>
    <property type="project" value="FlyBase"/>
</dbReference>
<dbReference type="GO" id="GO:0005739">
    <property type="term" value="C:mitochondrion"/>
    <property type="evidence" value="ECO:0007005"/>
    <property type="project" value="FlyBase"/>
</dbReference>
<dbReference type="GO" id="GO:0046930">
    <property type="term" value="C:pore complex"/>
    <property type="evidence" value="ECO:0007669"/>
    <property type="project" value="UniProtKB-KW"/>
</dbReference>
<dbReference type="GO" id="GO:0015288">
    <property type="term" value="F:porin activity"/>
    <property type="evidence" value="ECO:0007669"/>
    <property type="project" value="UniProtKB-KW"/>
</dbReference>
<dbReference type="GO" id="GO:0008320">
    <property type="term" value="F:protein transmembrane transporter activity"/>
    <property type="evidence" value="ECO:0000318"/>
    <property type="project" value="GO_Central"/>
</dbReference>
<dbReference type="GO" id="GO:0071456">
    <property type="term" value="P:cellular response to hypoxia"/>
    <property type="evidence" value="ECO:0000315"/>
    <property type="project" value="FlyBase"/>
</dbReference>
<dbReference type="GO" id="GO:0006811">
    <property type="term" value="P:monoatomic ion transport"/>
    <property type="evidence" value="ECO:0007669"/>
    <property type="project" value="UniProtKB-KW"/>
</dbReference>
<dbReference type="GO" id="GO:0030150">
    <property type="term" value="P:protein import into mitochondrial matrix"/>
    <property type="evidence" value="ECO:0000318"/>
    <property type="project" value="GO_Central"/>
</dbReference>
<dbReference type="GO" id="GO:0006626">
    <property type="term" value="P:protein targeting to mitochondrion"/>
    <property type="evidence" value="ECO:0000250"/>
    <property type="project" value="UniProtKB"/>
</dbReference>
<dbReference type="CDD" id="cd07305">
    <property type="entry name" value="Porin3_Tom40"/>
    <property type="match status" value="1"/>
</dbReference>
<dbReference type="FunFam" id="2.40.160.10:FF:000005">
    <property type="entry name" value="mitochondrial import receptor subunit TOM40 homolog"/>
    <property type="match status" value="1"/>
</dbReference>
<dbReference type="Gene3D" id="2.40.160.10">
    <property type="entry name" value="Porin"/>
    <property type="match status" value="1"/>
</dbReference>
<dbReference type="InterPro" id="IPR023614">
    <property type="entry name" value="Porin_dom_sf"/>
</dbReference>
<dbReference type="InterPro" id="IPR027246">
    <property type="entry name" value="Porin_Euk/Tom40"/>
</dbReference>
<dbReference type="InterPro" id="IPR037930">
    <property type="entry name" value="Tom40"/>
</dbReference>
<dbReference type="PANTHER" id="PTHR10802">
    <property type="entry name" value="MITOCHONDRIAL IMPORT RECEPTOR SUBUNIT TOM40"/>
    <property type="match status" value="1"/>
</dbReference>
<dbReference type="Pfam" id="PF01459">
    <property type="entry name" value="Porin_3"/>
    <property type="match status" value="1"/>
</dbReference>
<reference key="1">
    <citation type="submission" date="1999-07" db="EMBL/GenBank/DDBJ databases">
        <title>A mutation in Drosophila mitochondrial membrane import protein disrupts early germ cell differentiation.</title>
        <authorList>
            <person name="Xu E.Y."/>
            <person name="Wu C.-I."/>
        </authorList>
    </citation>
    <scope>NUCLEOTIDE SEQUENCE [MRNA]</scope>
    <source>
        <tissue>Head</tissue>
        <tissue>Ovary</tissue>
        <tissue>Testis</tissue>
    </source>
</reference>
<reference key="2">
    <citation type="journal article" date="2000" name="Science">
        <title>The genome sequence of Drosophila melanogaster.</title>
        <authorList>
            <person name="Adams M.D."/>
            <person name="Celniker S.E."/>
            <person name="Holt R.A."/>
            <person name="Evans C.A."/>
            <person name="Gocayne J.D."/>
            <person name="Amanatides P.G."/>
            <person name="Scherer S.E."/>
            <person name="Li P.W."/>
            <person name="Hoskins R.A."/>
            <person name="Galle R.F."/>
            <person name="George R.A."/>
            <person name="Lewis S.E."/>
            <person name="Richards S."/>
            <person name="Ashburner M."/>
            <person name="Henderson S.N."/>
            <person name="Sutton G.G."/>
            <person name="Wortman J.R."/>
            <person name="Yandell M.D."/>
            <person name="Zhang Q."/>
            <person name="Chen L.X."/>
            <person name="Brandon R.C."/>
            <person name="Rogers Y.-H.C."/>
            <person name="Blazej R.G."/>
            <person name="Champe M."/>
            <person name="Pfeiffer B.D."/>
            <person name="Wan K.H."/>
            <person name="Doyle C."/>
            <person name="Baxter E.G."/>
            <person name="Helt G."/>
            <person name="Nelson C.R."/>
            <person name="Miklos G.L.G."/>
            <person name="Abril J.F."/>
            <person name="Agbayani A."/>
            <person name="An H.-J."/>
            <person name="Andrews-Pfannkoch C."/>
            <person name="Baldwin D."/>
            <person name="Ballew R.M."/>
            <person name="Basu A."/>
            <person name="Baxendale J."/>
            <person name="Bayraktaroglu L."/>
            <person name="Beasley E.M."/>
            <person name="Beeson K.Y."/>
            <person name="Benos P.V."/>
            <person name="Berman B.P."/>
            <person name="Bhandari D."/>
            <person name="Bolshakov S."/>
            <person name="Borkova D."/>
            <person name="Botchan M.R."/>
            <person name="Bouck J."/>
            <person name="Brokstein P."/>
            <person name="Brottier P."/>
            <person name="Burtis K.C."/>
            <person name="Busam D.A."/>
            <person name="Butler H."/>
            <person name="Cadieu E."/>
            <person name="Center A."/>
            <person name="Chandra I."/>
            <person name="Cherry J.M."/>
            <person name="Cawley S."/>
            <person name="Dahlke C."/>
            <person name="Davenport L.B."/>
            <person name="Davies P."/>
            <person name="de Pablos B."/>
            <person name="Delcher A."/>
            <person name="Deng Z."/>
            <person name="Mays A.D."/>
            <person name="Dew I."/>
            <person name="Dietz S.M."/>
            <person name="Dodson K."/>
            <person name="Doup L.E."/>
            <person name="Downes M."/>
            <person name="Dugan-Rocha S."/>
            <person name="Dunkov B.C."/>
            <person name="Dunn P."/>
            <person name="Durbin K.J."/>
            <person name="Evangelista C.C."/>
            <person name="Ferraz C."/>
            <person name="Ferriera S."/>
            <person name="Fleischmann W."/>
            <person name="Fosler C."/>
            <person name="Gabrielian A.E."/>
            <person name="Garg N.S."/>
            <person name="Gelbart W.M."/>
            <person name="Glasser K."/>
            <person name="Glodek A."/>
            <person name="Gong F."/>
            <person name="Gorrell J.H."/>
            <person name="Gu Z."/>
            <person name="Guan P."/>
            <person name="Harris M."/>
            <person name="Harris N.L."/>
            <person name="Harvey D.A."/>
            <person name="Heiman T.J."/>
            <person name="Hernandez J.R."/>
            <person name="Houck J."/>
            <person name="Hostin D."/>
            <person name="Houston K.A."/>
            <person name="Howland T.J."/>
            <person name="Wei M.-H."/>
            <person name="Ibegwam C."/>
            <person name="Jalali M."/>
            <person name="Kalush F."/>
            <person name="Karpen G.H."/>
            <person name="Ke Z."/>
            <person name="Kennison J.A."/>
            <person name="Ketchum K.A."/>
            <person name="Kimmel B.E."/>
            <person name="Kodira C.D."/>
            <person name="Kraft C.L."/>
            <person name="Kravitz S."/>
            <person name="Kulp D."/>
            <person name="Lai Z."/>
            <person name="Lasko P."/>
            <person name="Lei Y."/>
            <person name="Levitsky A.A."/>
            <person name="Li J.H."/>
            <person name="Li Z."/>
            <person name="Liang Y."/>
            <person name="Lin X."/>
            <person name="Liu X."/>
            <person name="Mattei B."/>
            <person name="McIntosh T.C."/>
            <person name="McLeod M.P."/>
            <person name="McPherson D."/>
            <person name="Merkulov G."/>
            <person name="Milshina N.V."/>
            <person name="Mobarry C."/>
            <person name="Morris J."/>
            <person name="Moshrefi A."/>
            <person name="Mount S.M."/>
            <person name="Moy M."/>
            <person name="Murphy B."/>
            <person name="Murphy L."/>
            <person name="Muzny D.M."/>
            <person name="Nelson D.L."/>
            <person name="Nelson D.R."/>
            <person name="Nelson K.A."/>
            <person name="Nixon K."/>
            <person name="Nusskern D.R."/>
            <person name="Pacleb J.M."/>
            <person name="Palazzolo M."/>
            <person name="Pittman G.S."/>
            <person name="Pan S."/>
            <person name="Pollard J."/>
            <person name="Puri V."/>
            <person name="Reese M.G."/>
            <person name="Reinert K."/>
            <person name="Remington K."/>
            <person name="Saunders R.D.C."/>
            <person name="Scheeler F."/>
            <person name="Shen H."/>
            <person name="Shue B.C."/>
            <person name="Siden-Kiamos I."/>
            <person name="Simpson M."/>
            <person name="Skupski M.P."/>
            <person name="Smith T.J."/>
            <person name="Spier E."/>
            <person name="Spradling A.C."/>
            <person name="Stapleton M."/>
            <person name="Strong R."/>
            <person name="Sun E."/>
            <person name="Svirskas R."/>
            <person name="Tector C."/>
            <person name="Turner R."/>
            <person name="Venter E."/>
            <person name="Wang A.H."/>
            <person name="Wang X."/>
            <person name="Wang Z.-Y."/>
            <person name="Wassarman D.A."/>
            <person name="Weinstock G.M."/>
            <person name="Weissenbach J."/>
            <person name="Williams S.M."/>
            <person name="Woodage T."/>
            <person name="Worley K.C."/>
            <person name="Wu D."/>
            <person name="Yang S."/>
            <person name="Yao Q.A."/>
            <person name="Ye J."/>
            <person name="Yeh R.-F."/>
            <person name="Zaveri J.S."/>
            <person name="Zhan M."/>
            <person name="Zhang G."/>
            <person name="Zhao Q."/>
            <person name="Zheng L."/>
            <person name="Zheng X.H."/>
            <person name="Zhong F.N."/>
            <person name="Zhong W."/>
            <person name="Zhou X."/>
            <person name="Zhu S.C."/>
            <person name="Zhu X."/>
            <person name="Smith H.O."/>
            <person name="Gibbs R.A."/>
            <person name="Myers E.W."/>
            <person name="Rubin G.M."/>
            <person name="Venter J.C."/>
        </authorList>
    </citation>
    <scope>NUCLEOTIDE SEQUENCE [LARGE SCALE GENOMIC DNA]</scope>
    <source>
        <strain>Berkeley</strain>
    </source>
</reference>
<reference key="3">
    <citation type="journal article" date="2002" name="Genome Biol.">
        <title>Annotation of the Drosophila melanogaster euchromatic genome: a systematic review.</title>
        <authorList>
            <person name="Misra S."/>
            <person name="Crosby M.A."/>
            <person name="Mungall C.J."/>
            <person name="Matthews B.B."/>
            <person name="Campbell K.S."/>
            <person name="Hradecky P."/>
            <person name="Huang Y."/>
            <person name="Kaminker J.S."/>
            <person name="Millburn G.H."/>
            <person name="Prochnik S.E."/>
            <person name="Smith C.D."/>
            <person name="Tupy J.L."/>
            <person name="Whitfield E.J."/>
            <person name="Bayraktaroglu L."/>
            <person name="Berman B.P."/>
            <person name="Bettencourt B.R."/>
            <person name="Celniker S.E."/>
            <person name="de Grey A.D.N.J."/>
            <person name="Drysdale R.A."/>
            <person name="Harris N.L."/>
            <person name="Richter J."/>
            <person name="Russo S."/>
            <person name="Schroeder A.J."/>
            <person name="Shu S.Q."/>
            <person name="Stapleton M."/>
            <person name="Yamada C."/>
            <person name="Ashburner M."/>
            <person name="Gelbart W.M."/>
            <person name="Rubin G.M."/>
            <person name="Lewis S.E."/>
        </authorList>
    </citation>
    <scope>GENOME REANNOTATION</scope>
    <source>
        <strain>Berkeley</strain>
    </source>
</reference>
<reference key="4">
    <citation type="journal article" date="2002" name="Genome Biol.">
        <title>A Drosophila full-length cDNA resource.</title>
        <authorList>
            <person name="Stapleton M."/>
            <person name="Carlson J.W."/>
            <person name="Brokstein P."/>
            <person name="Yu C."/>
            <person name="Champe M."/>
            <person name="George R.A."/>
            <person name="Guarin H."/>
            <person name="Kronmiller B."/>
            <person name="Pacleb J.M."/>
            <person name="Park S."/>
            <person name="Wan K.H."/>
            <person name="Rubin G.M."/>
            <person name="Celniker S.E."/>
        </authorList>
    </citation>
    <scope>NUCLEOTIDE SEQUENCE [LARGE SCALE MRNA]</scope>
    <source>
        <strain>Berkeley</strain>
        <tissue>Embryo</tissue>
    </source>
</reference>
<reference key="5">
    <citation type="journal article" date="2004" name="FEBS Lett.">
        <title>Germ-line specific variants of components of the mitochondrial outer membrane import machinery in Drosophila.</title>
        <authorList>
            <person name="Hwa J.J."/>
            <person name="Zhu A.J."/>
            <person name="Hiller M.A."/>
            <person name="Kon C.Y."/>
            <person name="Fuller M.T."/>
            <person name="Santel A."/>
        </authorList>
    </citation>
    <scope>TISSUE SPECIFICITY</scope>
    <scope>DEVELOPMENTAL STAGE</scope>
</reference>
<evidence type="ECO:0000250" key="1"/>
<evidence type="ECO:0000256" key="2">
    <source>
        <dbReference type="SAM" id="MobiDB-lite"/>
    </source>
</evidence>
<evidence type="ECO:0000269" key="3">
    <source>
    </source>
</evidence>
<evidence type="ECO:0000305" key="4"/>
<evidence type="ECO:0007829" key="5">
    <source>
        <dbReference type="PDB" id="9ETM"/>
    </source>
</evidence>
<protein>
    <recommendedName>
        <fullName>Mitochondrial import receptor subunit TOM40 homolog 1</fullName>
        <shortName>dtom40</shortName>
    </recommendedName>
    <alternativeName>
        <fullName>Male sterile protein 15</fullName>
    </alternativeName>
    <alternativeName>
        <fullName>Translocase of outer membrane 40 kDa subunit homolog 1</fullName>
    </alternativeName>
</protein>